<name>SOMA_SALSA</name>
<comment type="function">
    <text>Growth hormone plays an important role in growth control and is involved in the regulation of several anabolic processes. Implicated as an osmoregulatory substance important for seawater adaptation.</text>
</comment>
<comment type="subcellular location">
    <subcellularLocation>
        <location>Secreted</location>
    </subcellularLocation>
</comment>
<comment type="similarity">
    <text evidence="2">Belongs to the somatotropin/prolactin family.</text>
</comment>
<reference key="1">
    <citation type="journal article" date="1989" name="Nucleic Acids Res.">
        <title>The nucleotide sequence of Atlantic salmon growth hormone cDNA.</title>
        <authorList>
            <person name="Lorens J.B."/>
            <person name="Nerland A.H."/>
            <person name="Lossius I."/>
            <person name="Male R."/>
            <person name="Telle W."/>
            <person name="Totland G.K."/>
        </authorList>
    </citation>
    <scope>NUCLEOTIDE SEQUENCE [MRNA]</scope>
</reference>
<reference key="2">
    <citation type="journal article" date="1992" name="Biochim. Biophys. Acta">
        <title>The complete nucleotide sequence of the Atlantic salmon growth hormone I gene.</title>
        <authorList>
            <person name="Male R."/>
            <person name="Nerland A.H."/>
            <person name="Lorens J.B."/>
            <person name="Telle W."/>
            <person name="Lossius I."/>
            <person name="Totland G.K."/>
        </authorList>
    </citation>
    <scope>NUCLEOTIDE SEQUENCE [GENOMIC DNA]</scope>
    <source>
        <tissue>Liver</tissue>
    </source>
</reference>
<reference key="3">
    <citation type="journal article" date="1989" name="Gene">
        <title>The complete nucleotide sequence of the growth-hormone gene from Atlantic salmon (Salmo salar).</title>
        <authorList>
            <person name="Johansen B."/>
            <person name="Johnsen O.C."/>
            <person name="Valla S."/>
        </authorList>
    </citation>
    <scope>NUCLEOTIDE SEQUENCE [GENOMIC DNA]</scope>
</reference>
<dbReference type="EMBL" id="X14305">
    <property type="protein sequence ID" value="CAA32481.1"/>
    <property type="molecule type" value="mRNA"/>
</dbReference>
<dbReference type="EMBL" id="M21573">
    <property type="protein sequence ID" value="AAA49558.1"/>
    <property type="molecule type" value="Genomic_DNA"/>
</dbReference>
<dbReference type="EMBL" id="X61938">
    <property type="protein sequence ID" value="CAA43942.1"/>
    <property type="molecule type" value="Genomic_DNA"/>
</dbReference>
<dbReference type="PIR" id="A60621">
    <property type="entry name" value="A60621"/>
</dbReference>
<dbReference type="PIR" id="JS0179">
    <property type="entry name" value="JS0179"/>
</dbReference>
<dbReference type="PIR" id="S03709">
    <property type="entry name" value="S03709"/>
</dbReference>
<dbReference type="RefSeq" id="NP_001117148.1">
    <property type="nucleotide sequence ID" value="NM_001123676.1"/>
</dbReference>
<dbReference type="SMR" id="P10814"/>
<dbReference type="STRING" id="8030.ENSSSAP00000058473"/>
<dbReference type="PaxDb" id="8030-ENSSSAP00000058473"/>
<dbReference type="Ensembl" id="ENSSSAT00070061544">
    <property type="protein sequence ID" value="ENSSSAP00070058976"/>
    <property type="gene ID" value="ENSSSAG00070038314"/>
</dbReference>
<dbReference type="GeneID" id="100136588"/>
<dbReference type="KEGG" id="sasa:100136588"/>
<dbReference type="KEGG" id="sasa:106607462"/>
<dbReference type="OrthoDB" id="257605at7898"/>
<dbReference type="Proteomes" id="UP000087266">
    <property type="component" value="Chromosome ssa03"/>
</dbReference>
<dbReference type="Proteomes" id="UP000087266">
    <property type="component" value="Chromosome ssa06"/>
</dbReference>
<dbReference type="Bgee" id="ENSSSAG00000055013">
    <property type="expression patterns" value="Expressed in pituitary gland and 3 other cell types or tissues"/>
</dbReference>
<dbReference type="GO" id="GO:0005615">
    <property type="term" value="C:extracellular space"/>
    <property type="evidence" value="ECO:0000314"/>
    <property type="project" value="AgBase"/>
</dbReference>
<dbReference type="GO" id="GO:0070186">
    <property type="term" value="F:growth hormone activity"/>
    <property type="evidence" value="ECO:0007669"/>
    <property type="project" value="TreeGrafter"/>
</dbReference>
<dbReference type="GO" id="GO:0005131">
    <property type="term" value="F:growth hormone receptor binding"/>
    <property type="evidence" value="ECO:0000353"/>
    <property type="project" value="AgBase"/>
</dbReference>
<dbReference type="GO" id="GO:0046872">
    <property type="term" value="F:metal ion binding"/>
    <property type="evidence" value="ECO:0007669"/>
    <property type="project" value="UniProtKB-KW"/>
</dbReference>
<dbReference type="GO" id="GO:0048513">
    <property type="term" value="P:animal organ development"/>
    <property type="evidence" value="ECO:0007669"/>
    <property type="project" value="TreeGrafter"/>
</dbReference>
<dbReference type="GO" id="GO:0055074">
    <property type="term" value="P:calcium ion homeostasis"/>
    <property type="evidence" value="ECO:0000250"/>
    <property type="project" value="AgBase"/>
</dbReference>
<dbReference type="GO" id="GO:0060396">
    <property type="term" value="P:growth hormone receptor signaling pathway"/>
    <property type="evidence" value="ECO:0007669"/>
    <property type="project" value="TreeGrafter"/>
</dbReference>
<dbReference type="GO" id="GO:0042538">
    <property type="term" value="P:hyperosmotic salinity response"/>
    <property type="evidence" value="ECO:0000250"/>
    <property type="project" value="AgBase"/>
</dbReference>
<dbReference type="GO" id="GO:0042539">
    <property type="term" value="P:hypotonic salinity response"/>
    <property type="evidence" value="ECO:0000314"/>
    <property type="project" value="AgBase"/>
</dbReference>
<dbReference type="GO" id="GO:0010960">
    <property type="term" value="P:magnesium ion homeostasis"/>
    <property type="evidence" value="ECO:0000250"/>
    <property type="project" value="AgBase"/>
</dbReference>
<dbReference type="GO" id="GO:0009648">
    <property type="term" value="P:photoperiodism"/>
    <property type="evidence" value="ECO:0000314"/>
    <property type="project" value="AgBase"/>
</dbReference>
<dbReference type="GO" id="GO:0045927">
    <property type="term" value="P:positive regulation of growth"/>
    <property type="evidence" value="ECO:0007669"/>
    <property type="project" value="TreeGrafter"/>
</dbReference>
<dbReference type="GO" id="GO:0050766">
    <property type="term" value="P:positive regulation of phagocytosis"/>
    <property type="evidence" value="ECO:0000250"/>
    <property type="project" value="AgBase"/>
</dbReference>
<dbReference type="GO" id="GO:0046427">
    <property type="term" value="P:positive regulation of receptor signaling pathway via JAK-STAT"/>
    <property type="evidence" value="ECO:0007669"/>
    <property type="project" value="TreeGrafter"/>
</dbReference>
<dbReference type="GO" id="GO:0032930">
    <property type="term" value="P:positive regulation of superoxide anion generation"/>
    <property type="evidence" value="ECO:0000250"/>
    <property type="project" value="AgBase"/>
</dbReference>
<dbReference type="GO" id="GO:0002637">
    <property type="term" value="P:regulation of immunoglobulin production"/>
    <property type="evidence" value="ECO:0000250"/>
    <property type="project" value="AgBase"/>
</dbReference>
<dbReference type="GO" id="GO:0032355">
    <property type="term" value="P:response to estradiol"/>
    <property type="evidence" value="ECO:0000314"/>
    <property type="project" value="AgBase"/>
</dbReference>
<dbReference type="GO" id="GO:0032094">
    <property type="term" value="P:response to food"/>
    <property type="evidence" value="ECO:0000314"/>
    <property type="project" value="AgBase"/>
</dbReference>
<dbReference type="GO" id="GO:0009416">
    <property type="term" value="P:response to light stimulus"/>
    <property type="evidence" value="ECO:0000314"/>
    <property type="project" value="AgBase"/>
</dbReference>
<dbReference type="GO" id="GO:0042594">
    <property type="term" value="P:response to starvation"/>
    <property type="evidence" value="ECO:0000314"/>
    <property type="project" value="AgBase"/>
</dbReference>
<dbReference type="GO" id="GO:0055078">
    <property type="term" value="P:sodium ion homeostasis"/>
    <property type="evidence" value="ECO:0000250"/>
    <property type="project" value="AgBase"/>
</dbReference>
<dbReference type="CDD" id="cd10285">
    <property type="entry name" value="somatotropin_like"/>
    <property type="match status" value="1"/>
</dbReference>
<dbReference type="FunFam" id="1.20.1250.10:FF:000009">
    <property type="entry name" value="Growth hormone"/>
    <property type="match status" value="1"/>
</dbReference>
<dbReference type="Gene3D" id="1.20.1250.10">
    <property type="match status" value="1"/>
</dbReference>
<dbReference type="InterPro" id="IPR009079">
    <property type="entry name" value="4_helix_cytokine-like_core"/>
</dbReference>
<dbReference type="InterPro" id="IPR034975">
    <property type="entry name" value="Somatotropin"/>
</dbReference>
<dbReference type="InterPro" id="IPR001400">
    <property type="entry name" value="Somatotropin/Prolactin"/>
</dbReference>
<dbReference type="InterPro" id="IPR018116">
    <property type="entry name" value="Somatotropin_CS"/>
</dbReference>
<dbReference type="PANTHER" id="PTHR11417:SF2">
    <property type="entry name" value="SOMATOTROPIN"/>
    <property type="match status" value="1"/>
</dbReference>
<dbReference type="PANTHER" id="PTHR11417">
    <property type="entry name" value="SOMATOTROPIN,PROLACTIN"/>
    <property type="match status" value="1"/>
</dbReference>
<dbReference type="Pfam" id="PF00103">
    <property type="entry name" value="Hormone_1"/>
    <property type="match status" value="1"/>
</dbReference>
<dbReference type="PRINTS" id="PR00836">
    <property type="entry name" value="SOMATOTROPIN"/>
</dbReference>
<dbReference type="SUPFAM" id="SSF47266">
    <property type="entry name" value="4-helical cytokines"/>
    <property type="match status" value="1"/>
</dbReference>
<dbReference type="PROSITE" id="PS00266">
    <property type="entry name" value="SOMATOTROPIN_1"/>
    <property type="match status" value="1"/>
</dbReference>
<dbReference type="PROSITE" id="PS00338">
    <property type="entry name" value="SOMATOTROPIN_2"/>
    <property type="match status" value="1"/>
</dbReference>
<protein>
    <recommendedName>
        <fullName>Somatotropin</fullName>
    </recommendedName>
    <alternativeName>
        <fullName>Growth hormone</fullName>
    </alternativeName>
</protein>
<feature type="signal peptide" evidence="1">
    <location>
        <begin position="1"/>
        <end position="22"/>
    </location>
</feature>
<feature type="chain" id="PRO_0000033051" description="Somatotropin">
    <location>
        <begin position="23"/>
        <end position="210"/>
    </location>
</feature>
<feature type="binding site" evidence="1">
    <location>
        <position position="38"/>
    </location>
    <ligand>
        <name>Zn(2+)</name>
        <dbReference type="ChEBI" id="CHEBI:29105"/>
    </ligand>
</feature>
<feature type="binding site" evidence="1">
    <location>
        <position position="192"/>
    </location>
    <ligand>
        <name>Zn(2+)</name>
        <dbReference type="ChEBI" id="CHEBI:29105"/>
    </ligand>
</feature>
<feature type="disulfide bond" evidence="1">
    <location>
        <begin position="71"/>
        <end position="183"/>
    </location>
</feature>
<feature type="disulfide bond" evidence="1">
    <location>
        <begin position="200"/>
        <end position="208"/>
    </location>
</feature>
<feature type="sequence conflict" description="In Ref. 3; AAA49558." evidence="2" ref="3">
    <original>M</original>
    <variation>L</variation>
    <location>
        <position position="42"/>
    </location>
</feature>
<feature type="sequence conflict" description="In Ref. 3; AAA49558." evidence="2" ref="3">
    <original>P</original>
    <variation>S</variation>
    <location>
        <position position="56"/>
    </location>
</feature>
<feature type="sequence conflict" description="In Ref. 3; AAA49558." evidence="2" ref="3">
    <original>L</original>
    <variation>Q</variation>
    <location>
        <position position="83"/>
    </location>
</feature>
<feature type="sequence conflict" description="In Ref. 3; AAA49558." evidence="2" ref="3">
    <original>T</original>
    <variation>A</variation>
    <location>
        <position position="112"/>
    </location>
</feature>
<feature type="sequence conflict" description="In Ref. 3; AAA49558." evidence="2" ref="3">
    <original>Q</original>
    <variation>H</variation>
    <location>
        <position position="157"/>
    </location>
</feature>
<feature type="sequence conflict" description="In Ref. 3; AAA49558." evidence="2" ref="3">
    <original>V</original>
    <variation>I</variation>
    <location>
        <position position="174"/>
    </location>
</feature>
<proteinExistence type="evidence at transcript level"/>
<organism>
    <name type="scientific">Salmo salar</name>
    <name type="common">Atlantic salmon</name>
    <dbReference type="NCBI Taxonomy" id="8030"/>
    <lineage>
        <taxon>Eukaryota</taxon>
        <taxon>Metazoa</taxon>
        <taxon>Chordata</taxon>
        <taxon>Craniata</taxon>
        <taxon>Vertebrata</taxon>
        <taxon>Euteleostomi</taxon>
        <taxon>Actinopterygii</taxon>
        <taxon>Neopterygii</taxon>
        <taxon>Teleostei</taxon>
        <taxon>Protacanthopterygii</taxon>
        <taxon>Salmoniformes</taxon>
        <taxon>Salmonidae</taxon>
        <taxon>Salmoninae</taxon>
        <taxon>Salmo</taxon>
    </lineage>
</organism>
<sequence length="210" mass="23894">MGQVFLLMPVLLVSCFLSQGAAMENQRLFNIAVNRVQHLHLMAQKMFNDFEGTLLPDERRQLNKIFLLDFCNSDSIVSPIDKLETQKSSVLKLLHISFRLIESWEYPSQTLTISNSLMVRNSNQISEKLSDLKVGINLLIKGSQDGVLSLDDNDSQQLPPYGNYYQNLGGDGNVRRNYELLACFKKDMHKVETYLTVAKCRKSLEANCTL</sequence>
<keyword id="KW-1015">Disulfide bond</keyword>
<keyword id="KW-0372">Hormone</keyword>
<keyword id="KW-0479">Metal-binding</keyword>
<keyword id="KW-1185">Reference proteome</keyword>
<keyword id="KW-0964">Secreted</keyword>
<keyword id="KW-0732">Signal</keyword>
<keyword id="KW-0862">Zinc</keyword>
<gene>
    <name type="primary">gh</name>
</gene>
<accession>P10814</accession>
<evidence type="ECO:0000250" key="1"/>
<evidence type="ECO:0000305" key="2"/>